<gene>
    <name evidence="1" type="primary">murQ</name>
    <name type="ordered locus">syc1533_d</name>
</gene>
<accession>Q5N1U7</accession>
<keyword id="KW-0119">Carbohydrate metabolism</keyword>
<keyword id="KW-0456">Lyase</keyword>
<feature type="chain" id="PRO_0000249670" description="N-acetylmuramic acid 6-phosphate etherase">
    <location>
        <begin position="1"/>
        <end position="307"/>
    </location>
</feature>
<feature type="domain" description="SIS" evidence="1">
    <location>
        <begin position="60"/>
        <end position="223"/>
    </location>
</feature>
<feature type="active site" description="Proton donor" evidence="1">
    <location>
        <position position="88"/>
    </location>
</feature>
<feature type="active site" evidence="1">
    <location>
        <position position="119"/>
    </location>
</feature>
<proteinExistence type="inferred from homology"/>
<dbReference type="EC" id="4.2.1.126" evidence="1"/>
<dbReference type="EMBL" id="AP008231">
    <property type="protein sequence ID" value="BAD79723.1"/>
    <property type="molecule type" value="Genomic_DNA"/>
</dbReference>
<dbReference type="RefSeq" id="WP_011243843.1">
    <property type="nucleotide sequence ID" value="NZ_CP085785.1"/>
</dbReference>
<dbReference type="SMR" id="Q5N1U7"/>
<dbReference type="GeneID" id="72431476"/>
<dbReference type="KEGG" id="syc:syc1533_d"/>
<dbReference type="eggNOG" id="COG2103">
    <property type="taxonomic scope" value="Bacteria"/>
</dbReference>
<dbReference type="UniPathway" id="UPA00342"/>
<dbReference type="Proteomes" id="UP000001175">
    <property type="component" value="Chromosome"/>
</dbReference>
<dbReference type="GO" id="GO:0097367">
    <property type="term" value="F:carbohydrate derivative binding"/>
    <property type="evidence" value="ECO:0007669"/>
    <property type="project" value="InterPro"/>
</dbReference>
<dbReference type="GO" id="GO:0016835">
    <property type="term" value="F:carbon-oxygen lyase activity"/>
    <property type="evidence" value="ECO:0007669"/>
    <property type="project" value="UniProtKB-UniRule"/>
</dbReference>
<dbReference type="GO" id="GO:0016803">
    <property type="term" value="F:ether hydrolase activity"/>
    <property type="evidence" value="ECO:0007669"/>
    <property type="project" value="TreeGrafter"/>
</dbReference>
<dbReference type="GO" id="GO:0046348">
    <property type="term" value="P:amino sugar catabolic process"/>
    <property type="evidence" value="ECO:0007669"/>
    <property type="project" value="InterPro"/>
</dbReference>
<dbReference type="GO" id="GO:0097173">
    <property type="term" value="P:N-acetylmuramic acid catabolic process"/>
    <property type="evidence" value="ECO:0007669"/>
    <property type="project" value="UniProtKB-UniPathway"/>
</dbReference>
<dbReference type="GO" id="GO:0009254">
    <property type="term" value="P:peptidoglycan turnover"/>
    <property type="evidence" value="ECO:0007669"/>
    <property type="project" value="TreeGrafter"/>
</dbReference>
<dbReference type="CDD" id="cd05007">
    <property type="entry name" value="SIS_Etherase"/>
    <property type="match status" value="1"/>
</dbReference>
<dbReference type="FunFam" id="3.40.50.10490:FF:000014">
    <property type="entry name" value="N-acetylmuramic acid 6-phosphate etherase"/>
    <property type="match status" value="1"/>
</dbReference>
<dbReference type="Gene3D" id="1.10.8.1080">
    <property type="match status" value="1"/>
</dbReference>
<dbReference type="Gene3D" id="3.40.50.10490">
    <property type="entry name" value="Glucose-6-phosphate isomerase like protein, domain 1"/>
    <property type="match status" value="2"/>
</dbReference>
<dbReference type="HAMAP" id="MF_00068">
    <property type="entry name" value="MurQ"/>
    <property type="match status" value="1"/>
</dbReference>
<dbReference type="InterPro" id="IPR005488">
    <property type="entry name" value="Etherase_MurQ"/>
</dbReference>
<dbReference type="InterPro" id="IPR005486">
    <property type="entry name" value="Glucokinase_regulatory_CS"/>
</dbReference>
<dbReference type="InterPro" id="IPR040190">
    <property type="entry name" value="MURQ/GCKR"/>
</dbReference>
<dbReference type="InterPro" id="IPR001347">
    <property type="entry name" value="SIS_dom"/>
</dbReference>
<dbReference type="InterPro" id="IPR046348">
    <property type="entry name" value="SIS_dom_sf"/>
</dbReference>
<dbReference type="NCBIfam" id="TIGR00274">
    <property type="entry name" value="N-acetylmuramic acid 6-phosphate etherase"/>
    <property type="match status" value="1"/>
</dbReference>
<dbReference type="NCBIfam" id="NF003915">
    <property type="entry name" value="PRK05441.1"/>
    <property type="match status" value="1"/>
</dbReference>
<dbReference type="NCBIfam" id="NF009222">
    <property type="entry name" value="PRK12570.1"/>
    <property type="match status" value="1"/>
</dbReference>
<dbReference type="PANTHER" id="PTHR10088">
    <property type="entry name" value="GLUCOKINASE REGULATORY PROTEIN"/>
    <property type="match status" value="1"/>
</dbReference>
<dbReference type="PANTHER" id="PTHR10088:SF4">
    <property type="entry name" value="GLUCOKINASE REGULATORY PROTEIN"/>
    <property type="match status" value="1"/>
</dbReference>
<dbReference type="Pfam" id="PF22645">
    <property type="entry name" value="GKRP_SIS_N"/>
    <property type="match status" value="1"/>
</dbReference>
<dbReference type="SUPFAM" id="SSF53697">
    <property type="entry name" value="SIS domain"/>
    <property type="match status" value="1"/>
</dbReference>
<dbReference type="PROSITE" id="PS01272">
    <property type="entry name" value="GCKR"/>
    <property type="match status" value="1"/>
</dbReference>
<dbReference type="PROSITE" id="PS51464">
    <property type="entry name" value="SIS"/>
    <property type="match status" value="1"/>
</dbReference>
<reference key="1">
    <citation type="journal article" date="2007" name="Photosyn. Res.">
        <title>Complete nucleotide sequence of the freshwater unicellular cyanobacterium Synechococcus elongatus PCC 6301 chromosome: gene content and organization.</title>
        <authorList>
            <person name="Sugita C."/>
            <person name="Ogata K."/>
            <person name="Shikata M."/>
            <person name="Jikuya H."/>
            <person name="Takano J."/>
            <person name="Furumichi M."/>
            <person name="Kanehisa M."/>
            <person name="Omata T."/>
            <person name="Sugiura M."/>
            <person name="Sugita M."/>
        </authorList>
    </citation>
    <scope>NUCLEOTIDE SEQUENCE [LARGE SCALE GENOMIC DNA]</scope>
    <source>
        <strain>ATCC 27144 / PCC 6301 / SAUG 1402/1</strain>
    </source>
</reference>
<organism>
    <name type="scientific">Synechococcus sp. (strain ATCC 27144 / PCC 6301 / SAUG 1402/1)</name>
    <name type="common">Anacystis nidulans</name>
    <dbReference type="NCBI Taxonomy" id="269084"/>
    <lineage>
        <taxon>Bacteria</taxon>
        <taxon>Bacillati</taxon>
        <taxon>Cyanobacteriota</taxon>
        <taxon>Cyanophyceae</taxon>
        <taxon>Synechococcales</taxon>
        <taxon>Synechococcaceae</taxon>
        <taxon>Synechococcus</taxon>
    </lineage>
</organism>
<sequence length="307" mass="32231">MDPSLSDRGHLLTEQANPASQALDQLSPLELVDLFNQEDQHCLAAVAQAREAIAQAIEYAAQAIARGGRLFYIGAGTSGRLGVLDAAECPPTFCSDPEQVQGILAGGSAAMFRSSEGLEDRAEDGAVAIAEYQIGPRDFILGITAGGTTPYVHGALEAARSAGAKTGFLACVPADQVAIAVDVDIRVPVGPEILAGSTRLKAGTVTKMVLNQISTGAMVRIGKVYGNRMVDVAVTNRKLEDRALRILSDLLSIDRQQAAALLGANERSVKQALLQHWTGLEPAEAAALLTEHQGHLRAAVTAFSSLR</sequence>
<name>MURQ_SYNP6</name>
<protein>
    <recommendedName>
        <fullName evidence="1">N-acetylmuramic acid 6-phosphate etherase</fullName>
        <shortName evidence="1">MurNAc-6-P etherase</shortName>
        <ecNumber evidence="1">4.2.1.126</ecNumber>
    </recommendedName>
    <alternativeName>
        <fullName evidence="1">N-acetylmuramic acid 6-phosphate hydrolase</fullName>
    </alternativeName>
    <alternativeName>
        <fullName evidence="1">N-acetylmuramic acid 6-phosphate lyase</fullName>
    </alternativeName>
</protein>
<evidence type="ECO:0000255" key="1">
    <source>
        <dbReference type="HAMAP-Rule" id="MF_00068"/>
    </source>
</evidence>
<comment type="function">
    <text evidence="1">Specifically catalyzes the cleavage of the D-lactyl ether substituent of MurNAc 6-phosphate, producing GlcNAc 6-phosphate and D-lactate.</text>
</comment>
<comment type="catalytic activity">
    <reaction evidence="1">
        <text>N-acetyl-D-muramate 6-phosphate + H2O = N-acetyl-D-glucosamine 6-phosphate + (R)-lactate</text>
        <dbReference type="Rhea" id="RHEA:26410"/>
        <dbReference type="ChEBI" id="CHEBI:15377"/>
        <dbReference type="ChEBI" id="CHEBI:16004"/>
        <dbReference type="ChEBI" id="CHEBI:57513"/>
        <dbReference type="ChEBI" id="CHEBI:58722"/>
        <dbReference type="EC" id="4.2.1.126"/>
    </reaction>
</comment>
<comment type="pathway">
    <text evidence="1">Amino-sugar metabolism; N-acetylmuramate degradation.</text>
</comment>
<comment type="subunit">
    <text evidence="1">Homodimer.</text>
</comment>
<comment type="miscellaneous">
    <text evidence="1">A lyase-type mechanism (elimination/hydration) is suggested for the cleavage of the lactyl ether bond of MurNAc 6-phosphate, with the formation of an alpha,beta-unsaturated aldehyde intermediate with (E)-stereochemistry, followed by the syn addition of water to give product.</text>
</comment>
<comment type="similarity">
    <text evidence="1">Belongs to the GCKR-like family. MurNAc-6-P etherase subfamily.</text>
</comment>